<gene>
    <name type="ordered locus">SPO0400</name>
</gene>
<reference key="1">
    <citation type="journal article" date="2004" name="Nature">
        <title>Genome sequence of Silicibacter pomeroyi reveals adaptations to the marine environment.</title>
        <authorList>
            <person name="Moran M.A."/>
            <person name="Buchan A."/>
            <person name="Gonzalez J.M."/>
            <person name="Heidelberg J.F."/>
            <person name="Whitman W.B."/>
            <person name="Kiene R.P."/>
            <person name="Henriksen J.R."/>
            <person name="King G.M."/>
            <person name="Belas R."/>
            <person name="Fuqua C."/>
            <person name="Brinkac L.M."/>
            <person name="Lewis M."/>
            <person name="Johri S."/>
            <person name="Weaver B."/>
            <person name="Pai G."/>
            <person name="Eisen J.A."/>
            <person name="Rahe E."/>
            <person name="Sheldon W.M."/>
            <person name="Ye W."/>
            <person name="Miller T.R."/>
            <person name="Carlton J."/>
            <person name="Rasko D.A."/>
            <person name="Paulsen I.T."/>
            <person name="Ren Q."/>
            <person name="Daugherty S.C."/>
            <person name="DeBoy R.T."/>
            <person name="Dodson R.J."/>
            <person name="Durkin A.S."/>
            <person name="Madupu R."/>
            <person name="Nelson W.C."/>
            <person name="Sullivan S.A."/>
            <person name="Rosovitz M.J."/>
            <person name="Haft D.H."/>
            <person name="Selengut J."/>
            <person name="Ward N."/>
        </authorList>
    </citation>
    <scope>NUCLEOTIDE SEQUENCE [LARGE SCALE GENOMIC DNA]</scope>
    <source>
        <strain>ATCC 700808 / DSM 15171 / DSS-3</strain>
    </source>
</reference>
<reference key="2">
    <citation type="journal article" date="2014" name="Stand. Genomic Sci.">
        <title>An updated genome annotation for the model marine bacterium Ruegeria pomeroyi DSS-3.</title>
        <authorList>
            <person name="Rivers A.R."/>
            <person name="Smith C.B."/>
            <person name="Moran M.A."/>
        </authorList>
    </citation>
    <scope>GENOME REANNOTATION</scope>
    <source>
        <strain>ATCC 700808 / DSM 15171 / DSS-3</strain>
    </source>
</reference>
<feature type="chain" id="PRO_0000336262" description="UPF0102 protein SPO0400">
    <location>
        <begin position="1"/>
        <end position="123"/>
    </location>
</feature>
<name>Y400_RUEPO</name>
<evidence type="ECO:0000255" key="1">
    <source>
        <dbReference type="HAMAP-Rule" id="MF_00048"/>
    </source>
</evidence>
<keyword id="KW-1185">Reference proteome</keyword>
<proteinExistence type="inferred from homology"/>
<dbReference type="EMBL" id="CP000031">
    <property type="protein sequence ID" value="AAV93718.1"/>
    <property type="molecule type" value="Genomic_DNA"/>
</dbReference>
<dbReference type="RefSeq" id="WP_011046161.1">
    <property type="nucleotide sequence ID" value="NC_003911.12"/>
</dbReference>
<dbReference type="SMR" id="Q5LWE2"/>
<dbReference type="STRING" id="246200.SPO0400"/>
<dbReference type="PaxDb" id="246200-SPO0400"/>
<dbReference type="DNASU" id="3195920"/>
<dbReference type="KEGG" id="sil:SPO0400"/>
<dbReference type="eggNOG" id="COG0792">
    <property type="taxonomic scope" value="Bacteria"/>
</dbReference>
<dbReference type="HOGENOM" id="CLU_115353_0_1_5"/>
<dbReference type="OrthoDB" id="9812968at2"/>
<dbReference type="Proteomes" id="UP000001023">
    <property type="component" value="Chromosome"/>
</dbReference>
<dbReference type="GO" id="GO:0003676">
    <property type="term" value="F:nucleic acid binding"/>
    <property type="evidence" value="ECO:0007669"/>
    <property type="project" value="InterPro"/>
</dbReference>
<dbReference type="Gene3D" id="3.40.1350.10">
    <property type="match status" value="1"/>
</dbReference>
<dbReference type="HAMAP" id="MF_00048">
    <property type="entry name" value="UPF0102"/>
    <property type="match status" value="1"/>
</dbReference>
<dbReference type="InterPro" id="IPR011335">
    <property type="entry name" value="Restrct_endonuc-II-like"/>
</dbReference>
<dbReference type="InterPro" id="IPR011856">
    <property type="entry name" value="tRNA_endonuc-like_dom_sf"/>
</dbReference>
<dbReference type="InterPro" id="IPR003509">
    <property type="entry name" value="UPF0102_YraN-like"/>
</dbReference>
<dbReference type="NCBIfam" id="NF009150">
    <property type="entry name" value="PRK12497.1-3"/>
    <property type="match status" value="1"/>
</dbReference>
<dbReference type="NCBIfam" id="NF011269">
    <property type="entry name" value="PRK14676.1"/>
    <property type="match status" value="1"/>
</dbReference>
<dbReference type="PANTHER" id="PTHR34039">
    <property type="entry name" value="UPF0102 PROTEIN YRAN"/>
    <property type="match status" value="1"/>
</dbReference>
<dbReference type="PANTHER" id="PTHR34039:SF1">
    <property type="entry name" value="UPF0102 PROTEIN YRAN"/>
    <property type="match status" value="1"/>
</dbReference>
<dbReference type="Pfam" id="PF02021">
    <property type="entry name" value="UPF0102"/>
    <property type="match status" value="1"/>
</dbReference>
<dbReference type="SUPFAM" id="SSF52980">
    <property type="entry name" value="Restriction endonuclease-like"/>
    <property type="match status" value="1"/>
</dbReference>
<accession>Q5LWE2</accession>
<comment type="similarity">
    <text evidence="1">Belongs to the UPF0102 family.</text>
</comment>
<protein>
    <recommendedName>
        <fullName evidence="1">UPF0102 protein SPO0400</fullName>
    </recommendedName>
</protein>
<organism>
    <name type="scientific">Ruegeria pomeroyi (strain ATCC 700808 / DSM 15171 / DSS-3)</name>
    <name type="common">Silicibacter pomeroyi</name>
    <dbReference type="NCBI Taxonomy" id="246200"/>
    <lineage>
        <taxon>Bacteria</taxon>
        <taxon>Pseudomonadati</taxon>
        <taxon>Pseudomonadota</taxon>
        <taxon>Alphaproteobacteria</taxon>
        <taxon>Rhodobacterales</taxon>
        <taxon>Roseobacteraceae</taxon>
        <taxon>Ruegeria</taxon>
    </lineage>
</organism>
<sequence length="123" mass="13735">MKALASRGTRNHLAGEAAENSVLRDYERRGYHLVRRRWRGRCGEIDLIARSGDEVVFVEVKQSRDFARAAESLGARQMKRLHAAAAEFLAEEPDGQLTPMRFDVALVDGTGRLEIVENAFGHG</sequence>